<gene>
    <name evidence="1" type="primary">ribH</name>
    <name type="ordered locus">CLL_A1298</name>
</gene>
<accession>B2TJ82</accession>
<reference key="1">
    <citation type="submission" date="2008-04" db="EMBL/GenBank/DDBJ databases">
        <title>Complete sequence of Clostridium botulinum strain Eklund.</title>
        <authorList>
            <person name="Brinkac L.M."/>
            <person name="Brown J.L."/>
            <person name="Bruce D."/>
            <person name="Detter C."/>
            <person name="Munk C."/>
            <person name="Smith L.A."/>
            <person name="Smith T.J."/>
            <person name="Sutton G."/>
            <person name="Brettin T.S."/>
        </authorList>
    </citation>
    <scope>NUCLEOTIDE SEQUENCE [LARGE SCALE GENOMIC DNA]</scope>
    <source>
        <strain>Eklund 17B / Type B</strain>
    </source>
</reference>
<feature type="chain" id="PRO_1000098177" description="6,7-dimethyl-8-ribityllumazine synthase">
    <location>
        <begin position="1"/>
        <end position="153"/>
    </location>
</feature>
<feature type="active site" description="Proton donor" evidence="1">
    <location>
        <position position="88"/>
    </location>
</feature>
<feature type="binding site" evidence="1">
    <location>
        <position position="22"/>
    </location>
    <ligand>
        <name>5-amino-6-(D-ribitylamino)uracil</name>
        <dbReference type="ChEBI" id="CHEBI:15934"/>
    </ligand>
</feature>
<feature type="binding site" evidence="1">
    <location>
        <begin position="56"/>
        <end position="58"/>
    </location>
    <ligand>
        <name>5-amino-6-(D-ribitylamino)uracil</name>
        <dbReference type="ChEBI" id="CHEBI:15934"/>
    </ligand>
</feature>
<feature type="binding site" evidence="1">
    <location>
        <begin position="80"/>
        <end position="82"/>
    </location>
    <ligand>
        <name>5-amino-6-(D-ribitylamino)uracil</name>
        <dbReference type="ChEBI" id="CHEBI:15934"/>
    </ligand>
</feature>
<feature type="binding site" evidence="1">
    <location>
        <begin position="85"/>
        <end position="86"/>
    </location>
    <ligand>
        <name>(2S)-2-hydroxy-3-oxobutyl phosphate</name>
        <dbReference type="ChEBI" id="CHEBI:58830"/>
    </ligand>
</feature>
<feature type="binding site" evidence="1">
    <location>
        <position position="113"/>
    </location>
    <ligand>
        <name>5-amino-6-(D-ribitylamino)uracil</name>
        <dbReference type="ChEBI" id="CHEBI:15934"/>
    </ligand>
</feature>
<feature type="binding site" evidence="1">
    <location>
        <position position="127"/>
    </location>
    <ligand>
        <name>(2S)-2-hydroxy-3-oxobutyl phosphate</name>
        <dbReference type="ChEBI" id="CHEBI:58830"/>
    </ligand>
</feature>
<keyword id="KW-0686">Riboflavin biosynthesis</keyword>
<keyword id="KW-0808">Transferase</keyword>
<sequence>MNIFEGKLIAEGLKVGIIVGRFNEFIGSKLLDGALDGFKRHGVNVEDIDVAWVPGAFEMPLIAKKMAKSPKYDAVICLGAVIKGSTSHYDYVCSEVSKGIANVSLETGKPVMFGVLTTNNIEQAIERAGTKAGNKGYECAVGAIEMANLIKEL</sequence>
<comment type="function">
    <text evidence="1">Catalyzes the formation of 6,7-dimethyl-8-ribityllumazine by condensation of 5-amino-6-(D-ribitylamino)uracil with 3,4-dihydroxy-2-butanone 4-phosphate. This is the penultimate step in the biosynthesis of riboflavin.</text>
</comment>
<comment type="catalytic activity">
    <reaction evidence="1">
        <text>(2S)-2-hydroxy-3-oxobutyl phosphate + 5-amino-6-(D-ribitylamino)uracil = 6,7-dimethyl-8-(1-D-ribityl)lumazine + phosphate + 2 H2O + H(+)</text>
        <dbReference type="Rhea" id="RHEA:26152"/>
        <dbReference type="ChEBI" id="CHEBI:15377"/>
        <dbReference type="ChEBI" id="CHEBI:15378"/>
        <dbReference type="ChEBI" id="CHEBI:15934"/>
        <dbReference type="ChEBI" id="CHEBI:43474"/>
        <dbReference type="ChEBI" id="CHEBI:58201"/>
        <dbReference type="ChEBI" id="CHEBI:58830"/>
        <dbReference type="EC" id="2.5.1.78"/>
    </reaction>
</comment>
<comment type="pathway">
    <text evidence="1">Cofactor biosynthesis; riboflavin biosynthesis; riboflavin from 2-hydroxy-3-oxobutyl phosphate and 5-amino-6-(D-ribitylamino)uracil: step 1/2.</text>
</comment>
<comment type="similarity">
    <text evidence="1">Belongs to the DMRL synthase family.</text>
</comment>
<name>RISB_CLOBB</name>
<protein>
    <recommendedName>
        <fullName evidence="1">6,7-dimethyl-8-ribityllumazine synthase</fullName>
        <shortName evidence="1">DMRL synthase</shortName>
        <shortName evidence="1">LS</shortName>
        <shortName evidence="1">Lumazine synthase</shortName>
        <ecNumber evidence="1">2.5.1.78</ecNumber>
    </recommendedName>
</protein>
<proteinExistence type="inferred from homology"/>
<evidence type="ECO:0000255" key="1">
    <source>
        <dbReference type="HAMAP-Rule" id="MF_00178"/>
    </source>
</evidence>
<dbReference type="EC" id="2.5.1.78" evidence="1"/>
<dbReference type="EMBL" id="CP001056">
    <property type="protein sequence ID" value="ACD24387.1"/>
    <property type="molecule type" value="Genomic_DNA"/>
</dbReference>
<dbReference type="SMR" id="B2TJ82"/>
<dbReference type="KEGG" id="cbk:CLL_A1298"/>
<dbReference type="PATRIC" id="fig|935198.13.peg.1244"/>
<dbReference type="HOGENOM" id="CLU_089358_1_1_9"/>
<dbReference type="UniPathway" id="UPA00275">
    <property type="reaction ID" value="UER00404"/>
</dbReference>
<dbReference type="Proteomes" id="UP000001195">
    <property type="component" value="Chromosome"/>
</dbReference>
<dbReference type="GO" id="GO:0005829">
    <property type="term" value="C:cytosol"/>
    <property type="evidence" value="ECO:0007669"/>
    <property type="project" value="TreeGrafter"/>
</dbReference>
<dbReference type="GO" id="GO:0009349">
    <property type="term" value="C:riboflavin synthase complex"/>
    <property type="evidence" value="ECO:0007669"/>
    <property type="project" value="InterPro"/>
</dbReference>
<dbReference type="GO" id="GO:0000906">
    <property type="term" value="F:6,7-dimethyl-8-ribityllumazine synthase activity"/>
    <property type="evidence" value="ECO:0007669"/>
    <property type="project" value="UniProtKB-UniRule"/>
</dbReference>
<dbReference type="GO" id="GO:0009231">
    <property type="term" value="P:riboflavin biosynthetic process"/>
    <property type="evidence" value="ECO:0007669"/>
    <property type="project" value="UniProtKB-UniRule"/>
</dbReference>
<dbReference type="CDD" id="cd09209">
    <property type="entry name" value="Lumazine_synthase-I"/>
    <property type="match status" value="1"/>
</dbReference>
<dbReference type="FunFam" id="3.40.50.960:FF:000001">
    <property type="entry name" value="6,7-dimethyl-8-ribityllumazine synthase"/>
    <property type="match status" value="1"/>
</dbReference>
<dbReference type="Gene3D" id="3.40.50.960">
    <property type="entry name" value="Lumazine/riboflavin synthase"/>
    <property type="match status" value="1"/>
</dbReference>
<dbReference type="HAMAP" id="MF_00178">
    <property type="entry name" value="Lumazine_synth"/>
    <property type="match status" value="1"/>
</dbReference>
<dbReference type="InterPro" id="IPR034964">
    <property type="entry name" value="LS"/>
</dbReference>
<dbReference type="InterPro" id="IPR002180">
    <property type="entry name" value="LS/RS"/>
</dbReference>
<dbReference type="InterPro" id="IPR036467">
    <property type="entry name" value="LS/RS_sf"/>
</dbReference>
<dbReference type="NCBIfam" id="TIGR00114">
    <property type="entry name" value="lumazine-synth"/>
    <property type="match status" value="1"/>
</dbReference>
<dbReference type="NCBIfam" id="NF000812">
    <property type="entry name" value="PRK00061.1-4"/>
    <property type="match status" value="1"/>
</dbReference>
<dbReference type="PANTHER" id="PTHR21058:SF0">
    <property type="entry name" value="6,7-DIMETHYL-8-RIBITYLLUMAZINE SYNTHASE"/>
    <property type="match status" value="1"/>
</dbReference>
<dbReference type="PANTHER" id="PTHR21058">
    <property type="entry name" value="6,7-DIMETHYL-8-RIBITYLLUMAZINE SYNTHASE DMRL SYNTHASE LUMAZINE SYNTHASE"/>
    <property type="match status" value="1"/>
</dbReference>
<dbReference type="Pfam" id="PF00885">
    <property type="entry name" value="DMRL_synthase"/>
    <property type="match status" value="1"/>
</dbReference>
<dbReference type="SUPFAM" id="SSF52121">
    <property type="entry name" value="Lumazine synthase"/>
    <property type="match status" value="1"/>
</dbReference>
<organism>
    <name type="scientific">Clostridium botulinum (strain Eklund 17B / Type B)</name>
    <dbReference type="NCBI Taxonomy" id="935198"/>
    <lineage>
        <taxon>Bacteria</taxon>
        <taxon>Bacillati</taxon>
        <taxon>Bacillota</taxon>
        <taxon>Clostridia</taxon>
        <taxon>Eubacteriales</taxon>
        <taxon>Clostridiaceae</taxon>
        <taxon>Clostridium</taxon>
    </lineage>
</organism>